<keyword id="KW-1015">Disulfide bond</keyword>
<keyword id="KW-1035">Host cytoplasm</keyword>
<keyword id="KW-0832">Ubl conjugation</keyword>
<keyword id="KW-0946">Virion</keyword>
<organismHost>
    <name type="scientific">Ornithodoros</name>
    <name type="common">relapsing fever ticks</name>
    <dbReference type="NCBI Taxonomy" id="6937"/>
</organismHost>
<organismHost>
    <name type="scientific">Phacochoerus aethiopicus</name>
    <name type="common">Warthog</name>
    <dbReference type="NCBI Taxonomy" id="85517"/>
</organismHost>
<organismHost>
    <name type="scientific">Phacochoerus africanus</name>
    <name type="common">Warthog</name>
    <dbReference type="NCBI Taxonomy" id="41426"/>
</organismHost>
<organismHost>
    <name type="scientific">Potamochoerus larvatus</name>
    <name type="common">Bushpig</name>
    <dbReference type="NCBI Taxonomy" id="273792"/>
</organismHost>
<organismHost>
    <name type="scientific">Sus scrofa</name>
    <name type="common">Pig</name>
    <dbReference type="NCBI Taxonomy" id="9823"/>
</organismHost>
<feature type="initiator methionine" description="Removed" evidence="1">
    <location>
        <position position="1"/>
    </location>
</feature>
<feature type="chain" id="PRO_0000373449" description="Polyprotein pp62">
    <location>
        <begin position="2"/>
        <end position="534"/>
    </location>
</feature>
<feature type="chain" id="PRO_0000373450" description="p15">
    <location>
        <begin position="2"/>
        <end position="158"/>
    </location>
</feature>
<feature type="chain" id="PRO_0000373451" description="p35">
    <location>
        <begin position="159"/>
        <end position="463"/>
    </location>
</feature>
<feature type="chain" id="PRO_0000373452" description="p8">
    <location>
        <begin position="464"/>
        <end position="534"/>
    </location>
</feature>
<feature type="site" description="DNA-binding" evidence="1">
    <location>
        <position position="10"/>
    </location>
</feature>
<feature type="site" description="DNA-binding" evidence="1">
    <location>
        <position position="39"/>
    </location>
</feature>
<feature type="site" description="Cleavage; by viral protease S273R" evidence="1">
    <location>
        <begin position="158"/>
        <end position="159"/>
    </location>
</feature>
<feature type="site" description="Cleavage; by viral protease S273R" evidence="1">
    <location>
        <begin position="463"/>
        <end position="464"/>
    </location>
</feature>
<feature type="disulfide bond" description="Interchain (with C-30)" evidence="1">
    <location>
        <position position="9"/>
    </location>
</feature>
<feature type="disulfide bond" description="Interchain (with C-9)" evidence="1">
    <location>
        <position position="30"/>
    </location>
</feature>
<accession>P0CA05</accession>
<dbReference type="EMBL" id="AY261360">
    <property type="status" value="NOT_ANNOTATED_CDS"/>
    <property type="molecule type" value="Genomic_DNA"/>
</dbReference>
<dbReference type="SMR" id="P0CA05"/>
<dbReference type="Proteomes" id="UP000000861">
    <property type="component" value="Segment"/>
</dbReference>
<dbReference type="GO" id="GO:0044220">
    <property type="term" value="C:host cell perinuclear region of cytoplasm"/>
    <property type="evidence" value="ECO:0007669"/>
    <property type="project" value="UniProtKB-SubCell"/>
</dbReference>
<dbReference type="GO" id="GO:0044423">
    <property type="term" value="C:virion component"/>
    <property type="evidence" value="ECO:0007669"/>
    <property type="project" value="UniProtKB-KW"/>
</dbReference>
<comment type="function">
    <molecule>Polyprotein pp62</molecule>
    <text evidence="1">Essential for the correct assembly and maturation of the core of the virion.</text>
</comment>
<comment type="function">
    <molecule>p35</molecule>
    <text evidence="1">Component of the core shell (By similarity). Binds to phosphatidylserine, which may enable the core shell binding with the inner membrane (By similarity).</text>
</comment>
<comment type="function">
    <molecule>p15</molecule>
    <text evidence="1">Component of the core shell (By similarity). Binds to phosphatidylserine and DNA, which may link the core shell to the inner membrane and to the viral nucleoid (By similarity).</text>
</comment>
<comment type="function">
    <molecule>p8</molecule>
    <text evidence="1">Component of the core shell.</text>
</comment>
<comment type="subunit">
    <molecule>p35</molecule>
    <text evidence="1">Monomer (By similarity). Predominantly exists as a monomer, with very little dimers (By similarity). Homodimerization seems to be linked to low pH (By similarity).</text>
</comment>
<comment type="subunit">
    <molecule>p15</molecule>
    <text evidence="1">Homodimer; disulfide-linked (By similarity). Homotrimer; disulfide-linked (By similarity). Homohexamer (By similarity).</text>
</comment>
<comment type="subcellular location">
    <molecule>Polyprotein pp62</molecule>
    <subcellularLocation>
        <location evidence="1">Host cytoplasm</location>
        <location evidence="1">Host perinuclear region</location>
    </subcellularLocation>
    <text evidence="1">Found in perinuclear cytoplasmic viral factories during assembly.</text>
</comment>
<comment type="subcellular location">
    <molecule>p35</molecule>
    <subcellularLocation>
        <location evidence="1">Virion</location>
    </subcellularLocation>
    <text evidence="1">Located in the core shell, which functions like a matrix between the DNA and the inner envelope.</text>
</comment>
<comment type="subcellular location">
    <molecule>p15</molecule>
    <subcellularLocation>
        <location evidence="1">Virion</location>
    </subcellularLocation>
    <text evidence="1">Located in the core shell, which functions like a matrix between the DNA and the inner envelope.</text>
</comment>
<comment type="induction">
    <text evidence="2">Expressed in the late phase of the viral replicative cycle.</text>
</comment>
<comment type="PTM">
    <molecule>p15</molecule>
    <text evidence="1">Monoubiquitinated in vitro by viral UBCv1.</text>
</comment>
<comment type="PTM">
    <molecule>Polyprotein pp62</molecule>
    <text evidence="1">Specific enzymatic cleavages in vivo by the viral pS273R protease yield mature proteins.</text>
</comment>
<comment type="similarity">
    <text evidence="2">Belongs to the asfivirus polyprotein pp62 family.</text>
</comment>
<organism>
    <name type="scientific">African swine fever virus (isolate Pig/Kenya/KEN-50/1950)</name>
    <name type="common">ASFV</name>
    <dbReference type="NCBI Taxonomy" id="561445"/>
    <lineage>
        <taxon>Viruses</taxon>
        <taxon>Varidnaviria</taxon>
        <taxon>Bamfordvirae</taxon>
        <taxon>Nucleocytoviricota</taxon>
        <taxon>Pokkesviricetes</taxon>
        <taxon>Asfuvirales</taxon>
        <taxon>Asfarviridae</taxon>
        <taxon>Asfivirus</taxon>
        <taxon>African swine fever virus</taxon>
    </lineage>
</organism>
<proteinExistence type="inferred from homology"/>
<protein>
    <recommendedName>
        <fullName evidence="1">Polyprotein pp62</fullName>
    </recommendedName>
    <alternativeName>
        <fullName>60 kDa polyprotein</fullName>
        <shortName>p60</shortName>
    </alternativeName>
    <alternativeName>
        <fullName>62 kDa polyprotein</fullName>
        <shortName>p62</shortName>
    </alternativeName>
    <component>
        <recommendedName>
            <fullName evidence="1">p15</fullName>
        </recommendedName>
        <alternativeName>
            <fullName>PIG1</fullName>
        </alternativeName>
    </component>
    <component>
        <recommendedName>
            <fullName evidence="1">p35</fullName>
        </recommendedName>
    </component>
    <component>
        <recommendedName>
            <fullName evidence="1">p8</fullName>
        </recommendedName>
    </component>
</protein>
<reference key="1">
    <citation type="submission" date="2003-03" db="EMBL/GenBank/DDBJ databases">
        <title>African swine fever virus genomes.</title>
        <authorList>
            <person name="Kutish G.F."/>
            <person name="Rock D.L."/>
        </authorList>
    </citation>
    <scope>NUCLEOTIDE SEQUENCE [LARGE SCALE GENOMIC DNA]</scope>
</reference>
<evidence type="ECO:0000250" key="1">
    <source>
        <dbReference type="UniProtKB" id="Q65179"/>
    </source>
</evidence>
<evidence type="ECO:0000305" key="2"/>
<sequence>MPSNMKQFCKISVWLQQHDPDLLEIINNLCMLGNLSAAKYKHGVTFIYPKQAKIRDEIKKHAYSNDPSQAIKTLESLILPFYIPTPMEFTGEIGSYTGVKLEVEKKEANKVILKNGEAVLIPAADFKPFPDRRLAVWIMESGSMPLEGPPYKRKKEGGGNDPPVSKHISPYTPRTRIAIEVEKAFDECMRQNWCSVNNPYLAKSVSLLSFLSLNHPTEFIKVLPLIDFDPLVTFYLLLEPYKTHGDDFLIPETILFGPTGWNGTDLYQSAMLEFKKFFTQITRQTFMDIADTATKEVDVPICYSDPETVHSYANHVRTEILHHNMVNKVTTPNLVVQAYNELEQTNTIRHYGPIFPESTINALRFWKKLWQDEQRFVIHGLHRTLMDQPTYETSEFAEIVRNLRFSRPGNNYINELNITSPAMYGDKHTTGDIAPNDRFAMLVAFINSTDFLYTAIPEEKVGGNDTQTGSQTSSLTDLVPTRLHSFLNHNLSKLKILNRAQQTVKNILSNDCLNQLKHYVKHTGKNEILKLLQE</sequence>
<name>PP62_ASFK5</name>
<gene>
    <name type="ordered locus">Ken-106</name>
</gene>